<comment type="function">
    <text evidence="1">Snake venom phospholipase A2 (PLA2) that inhibits collagen-induced platelet aggregation. PLA2 catalyzes the calcium-dependent hydrolysis of the 2-acyl groups in 3-sn-phosphoglycerides (By similarity).</text>
</comment>
<comment type="catalytic activity">
    <reaction evidence="3 4">
        <text>a 1,2-diacyl-sn-glycero-3-phosphocholine + H2O = a 1-acyl-sn-glycero-3-phosphocholine + a fatty acid + H(+)</text>
        <dbReference type="Rhea" id="RHEA:15801"/>
        <dbReference type="ChEBI" id="CHEBI:15377"/>
        <dbReference type="ChEBI" id="CHEBI:15378"/>
        <dbReference type="ChEBI" id="CHEBI:28868"/>
        <dbReference type="ChEBI" id="CHEBI:57643"/>
        <dbReference type="ChEBI" id="CHEBI:58168"/>
        <dbReference type="EC" id="3.1.1.4"/>
    </reaction>
</comment>
<comment type="cofactor">
    <cofactor evidence="1">
        <name>Ca(2+)</name>
        <dbReference type="ChEBI" id="CHEBI:29108"/>
    </cofactor>
    <text evidence="1">Binds 1 Ca(2+) ion.</text>
</comment>
<comment type="subcellular location">
    <subcellularLocation>
        <location evidence="1">Secreted</location>
    </subcellularLocation>
</comment>
<comment type="tissue specificity">
    <text>Expressed by the venom gland.</text>
</comment>
<comment type="similarity">
    <text evidence="5">Belongs to the phospholipase A2 family. Group I subfamily. D49 sub-subfamily.</text>
</comment>
<accession>Q9PUH1</accession>
<dbReference type="EC" id="3.1.1.4"/>
<dbReference type="EMBL" id="AF184139">
    <property type="protein sequence ID" value="AAD56562.1"/>
    <property type="molecule type" value="mRNA"/>
</dbReference>
<dbReference type="SMR" id="Q9PUH1"/>
<dbReference type="GO" id="GO:0005576">
    <property type="term" value="C:extracellular region"/>
    <property type="evidence" value="ECO:0007669"/>
    <property type="project" value="UniProtKB-SubCell"/>
</dbReference>
<dbReference type="GO" id="GO:0005509">
    <property type="term" value="F:calcium ion binding"/>
    <property type="evidence" value="ECO:0007669"/>
    <property type="project" value="InterPro"/>
</dbReference>
<dbReference type="GO" id="GO:0047498">
    <property type="term" value="F:calcium-dependent phospholipase A2 activity"/>
    <property type="evidence" value="ECO:0007669"/>
    <property type="project" value="TreeGrafter"/>
</dbReference>
<dbReference type="GO" id="GO:0005543">
    <property type="term" value="F:phospholipid binding"/>
    <property type="evidence" value="ECO:0007669"/>
    <property type="project" value="TreeGrafter"/>
</dbReference>
<dbReference type="GO" id="GO:0090729">
    <property type="term" value="F:toxin activity"/>
    <property type="evidence" value="ECO:0007669"/>
    <property type="project" value="UniProtKB-KW"/>
</dbReference>
<dbReference type="GO" id="GO:0050482">
    <property type="term" value="P:arachidonate secretion"/>
    <property type="evidence" value="ECO:0007669"/>
    <property type="project" value="InterPro"/>
</dbReference>
<dbReference type="GO" id="GO:0016042">
    <property type="term" value="P:lipid catabolic process"/>
    <property type="evidence" value="ECO:0007669"/>
    <property type="project" value="UniProtKB-KW"/>
</dbReference>
<dbReference type="GO" id="GO:0006644">
    <property type="term" value="P:phospholipid metabolic process"/>
    <property type="evidence" value="ECO:0007669"/>
    <property type="project" value="InterPro"/>
</dbReference>
<dbReference type="CDD" id="cd00125">
    <property type="entry name" value="PLA2c"/>
    <property type="match status" value="1"/>
</dbReference>
<dbReference type="FunFam" id="1.20.90.10:FF:000007">
    <property type="entry name" value="Acidic phospholipase A2"/>
    <property type="match status" value="1"/>
</dbReference>
<dbReference type="Gene3D" id="1.20.90.10">
    <property type="entry name" value="Phospholipase A2 domain"/>
    <property type="match status" value="1"/>
</dbReference>
<dbReference type="InterPro" id="IPR001211">
    <property type="entry name" value="PLipase_A2"/>
</dbReference>
<dbReference type="InterPro" id="IPR033112">
    <property type="entry name" value="PLipase_A2_Asp_AS"/>
</dbReference>
<dbReference type="InterPro" id="IPR016090">
    <property type="entry name" value="PLipase_A2_dom"/>
</dbReference>
<dbReference type="InterPro" id="IPR036444">
    <property type="entry name" value="PLipase_A2_dom_sf"/>
</dbReference>
<dbReference type="InterPro" id="IPR033113">
    <property type="entry name" value="PLipase_A2_His_AS"/>
</dbReference>
<dbReference type="PANTHER" id="PTHR11716:SF94">
    <property type="entry name" value="PHOSPHOLIPASE A2"/>
    <property type="match status" value="1"/>
</dbReference>
<dbReference type="PANTHER" id="PTHR11716">
    <property type="entry name" value="PHOSPHOLIPASE A2 FAMILY MEMBER"/>
    <property type="match status" value="1"/>
</dbReference>
<dbReference type="Pfam" id="PF00068">
    <property type="entry name" value="Phospholip_A2_1"/>
    <property type="match status" value="1"/>
</dbReference>
<dbReference type="PRINTS" id="PR00389">
    <property type="entry name" value="PHPHLIPASEA2"/>
</dbReference>
<dbReference type="SMART" id="SM00085">
    <property type="entry name" value="PA2c"/>
    <property type="match status" value="1"/>
</dbReference>
<dbReference type="SUPFAM" id="SSF48619">
    <property type="entry name" value="Phospholipase A2, PLA2"/>
    <property type="match status" value="1"/>
</dbReference>
<dbReference type="PROSITE" id="PS00119">
    <property type="entry name" value="PA2_ASP"/>
    <property type="match status" value="1"/>
</dbReference>
<dbReference type="PROSITE" id="PS00118">
    <property type="entry name" value="PA2_HIS"/>
    <property type="match status" value="1"/>
</dbReference>
<evidence type="ECO:0000250" key="1"/>
<evidence type="ECO:0000255" key="2"/>
<evidence type="ECO:0000255" key="3">
    <source>
        <dbReference type="PROSITE-ProRule" id="PRU10035"/>
    </source>
</evidence>
<evidence type="ECO:0000255" key="4">
    <source>
        <dbReference type="PROSITE-ProRule" id="PRU10036"/>
    </source>
</evidence>
<evidence type="ECO:0000305" key="5"/>
<proteinExistence type="evidence at transcript level"/>
<protein>
    <recommendedName>
        <fullName>Acidic phospholipase A2 S14-72F</fullName>
        <shortName>svPLA2</shortName>
        <ecNumber>3.1.1.4</ecNumber>
    </recommendedName>
    <alternativeName>
        <fullName>ASPLA13</fullName>
    </alternativeName>
    <alternativeName>
        <fullName>Phosphatidylcholine 2-acylhydrolase</fullName>
    </alternativeName>
</protein>
<keyword id="KW-0106">Calcium</keyword>
<keyword id="KW-1015">Disulfide bond</keyword>
<keyword id="KW-1199">Hemostasis impairing toxin</keyword>
<keyword id="KW-0378">Hydrolase</keyword>
<keyword id="KW-0442">Lipid degradation</keyword>
<keyword id="KW-0443">Lipid metabolism</keyword>
<keyword id="KW-0479">Metal-binding</keyword>
<keyword id="KW-1201">Platelet aggregation inhibiting toxin</keyword>
<keyword id="KW-0964">Secreted</keyword>
<keyword id="KW-0732">Signal</keyword>
<keyword id="KW-0800">Toxin</keyword>
<organism>
    <name type="scientific">Austrelaps superbus</name>
    <name type="common">Lowland copperhead snake</name>
    <name type="synonym">Hoplocephalus superbus</name>
    <dbReference type="NCBI Taxonomy" id="29156"/>
    <lineage>
        <taxon>Eukaryota</taxon>
        <taxon>Metazoa</taxon>
        <taxon>Chordata</taxon>
        <taxon>Craniata</taxon>
        <taxon>Vertebrata</taxon>
        <taxon>Euteleostomi</taxon>
        <taxon>Lepidosauria</taxon>
        <taxon>Squamata</taxon>
        <taxon>Bifurcata</taxon>
        <taxon>Unidentata</taxon>
        <taxon>Episquamata</taxon>
        <taxon>Toxicofera</taxon>
        <taxon>Serpentes</taxon>
        <taxon>Colubroidea</taxon>
        <taxon>Elapidae</taxon>
        <taxon>Hydrophiinae</taxon>
        <taxon>Austrelaps</taxon>
    </lineage>
</organism>
<name>PA2AD_AUSSU</name>
<reference key="1">
    <citation type="journal article" date="2000" name="Arch. Biochem. Biophys.">
        <title>Phospholipase A(2) with platelet aggregation inhibitor activity from Austrelaps superbus venom: protein purification and cDNA cloning.</title>
        <authorList>
            <person name="Singh S.B."/>
            <person name="Armugam A."/>
            <person name="Kini R.M."/>
            <person name="Jeyaseelan K."/>
        </authorList>
    </citation>
    <scope>NUCLEOTIDE SEQUENCE [MRNA]</scope>
    <source>
        <tissue>Venom gland</tissue>
    </source>
</reference>
<feature type="signal peptide" evidence="2">
    <location>
        <begin position="1"/>
        <end position="19"/>
    </location>
</feature>
<feature type="propeptide" id="PRO_0000022809" evidence="2">
    <location>
        <begin position="20"/>
        <end position="27"/>
    </location>
</feature>
<feature type="chain" id="PRO_0000022810" description="Acidic phospholipase A2 S14-72F">
    <location>
        <begin position="28"/>
        <end position="146"/>
    </location>
</feature>
<feature type="active site" evidence="1">
    <location>
        <position position="75"/>
    </location>
</feature>
<feature type="active site" evidence="1">
    <location>
        <position position="120"/>
    </location>
</feature>
<feature type="binding site" evidence="1">
    <location>
        <position position="55"/>
    </location>
    <ligand>
        <name>Ca(2+)</name>
        <dbReference type="ChEBI" id="CHEBI:29108"/>
    </ligand>
</feature>
<feature type="binding site" evidence="1">
    <location>
        <position position="57"/>
    </location>
    <ligand>
        <name>Ca(2+)</name>
        <dbReference type="ChEBI" id="CHEBI:29108"/>
    </ligand>
</feature>
<feature type="binding site" evidence="1">
    <location>
        <position position="59"/>
    </location>
    <ligand>
        <name>Ca(2+)</name>
        <dbReference type="ChEBI" id="CHEBI:29108"/>
    </ligand>
</feature>
<feature type="binding site" evidence="1">
    <location>
        <position position="76"/>
    </location>
    <ligand>
        <name>Ca(2+)</name>
        <dbReference type="ChEBI" id="CHEBI:29108"/>
    </ligand>
</feature>
<feature type="disulfide bond" evidence="1">
    <location>
        <begin position="38"/>
        <end position="98"/>
    </location>
</feature>
<feature type="disulfide bond" evidence="1">
    <location>
        <begin position="54"/>
        <end position="145"/>
    </location>
</feature>
<feature type="disulfide bond" evidence="1">
    <location>
        <begin position="56"/>
        <end position="72"/>
    </location>
</feature>
<feature type="disulfide bond" evidence="1">
    <location>
        <begin position="71"/>
        <end position="126"/>
    </location>
</feature>
<feature type="disulfide bond" evidence="1">
    <location>
        <begin position="78"/>
        <end position="119"/>
    </location>
</feature>
<feature type="disulfide bond" evidence="1">
    <location>
        <begin position="87"/>
        <end position="112"/>
    </location>
</feature>
<feature type="disulfide bond" evidence="1">
    <location>
        <begin position="105"/>
        <end position="117"/>
    </location>
</feature>
<sequence length="146" mass="16280">MYPAHLLVLLAVCVSLLGAASIPPQPLNLVQFSYLIQCANHGSRATWHYTDYGCYCGSGGSGTPVDELDRCCQTHDNCYGEAEKKGCYPKMLAYDYYCGGDGPYCRNIKKECQRFVCDCDVEAAKCFARAPYNDANWNIDTKKRCQ</sequence>